<reference key="1">
    <citation type="journal article" date="1998" name="Nature">
        <title>The genome sequence of Rickettsia prowazekii and the origin of mitochondria.</title>
        <authorList>
            <person name="Andersson S.G.E."/>
            <person name="Zomorodipour A."/>
            <person name="Andersson J.O."/>
            <person name="Sicheritz-Ponten T."/>
            <person name="Alsmark U.C.M."/>
            <person name="Podowski R.M."/>
            <person name="Naeslund A.K."/>
            <person name="Eriksson A.-S."/>
            <person name="Winkler H.H."/>
            <person name="Kurland C.G."/>
        </authorList>
    </citation>
    <scope>NUCLEOTIDE SEQUENCE [LARGE SCALE GENOMIC DNA]</scope>
    <source>
        <strain>Madrid E</strain>
    </source>
</reference>
<evidence type="ECO:0000250" key="1"/>
<evidence type="ECO:0000305" key="2"/>
<organism>
    <name type="scientific">Rickettsia prowazekii (strain Madrid E)</name>
    <dbReference type="NCBI Taxonomy" id="272947"/>
    <lineage>
        <taxon>Bacteria</taxon>
        <taxon>Pseudomonadati</taxon>
        <taxon>Pseudomonadota</taxon>
        <taxon>Alphaproteobacteria</taxon>
        <taxon>Rickettsiales</taxon>
        <taxon>Rickettsiaceae</taxon>
        <taxon>Rickettsieae</taxon>
        <taxon>Rickettsia</taxon>
        <taxon>typhus group</taxon>
    </lineage>
</organism>
<proteinExistence type="inferred from homology"/>
<keyword id="KW-0963">Cytoplasm</keyword>
<keyword id="KW-0489">Methyltransferase</keyword>
<keyword id="KW-1185">Reference proteome</keyword>
<keyword id="KW-0949">S-adenosyl-L-methionine</keyword>
<keyword id="KW-0808">Transferase</keyword>
<keyword id="KW-0819">tRNA processing</keyword>
<accession>Q9ZE37</accession>
<dbReference type="EC" id="2.1.1.228"/>
<dbReference type="EMBL" id="AJ235270">
    <property type="protein sequence ID" value="CAA14580.1"/>
    <property type="molecule type" value="Genomic_DNA"/>
</dbReference>
<dbReference type="PIR" id="E71720">
    <property type="entry name" value="E71720"/>
</dbReference>
<dbReference type="RefSeq" id="NP_220503.1">
    <property type="nucleotide sequence ID" value="NC_000963.1"/>
</dbReference>
<dbReference type="RefSeq" id="WP_004597144.1">
    <property type="nucleotide sequence ID" value="NC_000963.1"/>
</dbReference>
<dbReference type="SMR" id="Q9ZE37"/>
<dbReference type="STRING" id="272947.gene:17555194"/>
<dbReference type="EnsemblBacteria" id="CAA14580">
    <property type="protein sequence ID" value="CAA14580"/>
    <property type="gene ID" value="CAA14580"/>
</dbReference>
<dbReference type="GeneID" id="57569239"/>
<dbReference type="KEGG" id="rpr:RP111"/>
<dbReference type="PATRIC" id="fig|272947.5.peg.113"/>
<dbReference type="eggNOG" id="COG0336">
    <property type="taxonomic scope" value="Bacteria"/>
</dbReference>
<dbReference type="HOGENOM" id="CLU_047363_0_1_5"/>
<dbReference type="OrthoDB" id="9807416at2"/>
<dbReference type="Proteomes" id="UP000002480">
    <property type="component" value="Chromosome"/>
</dbReference>
<dbReference type="GO" id="GO:0005829">
    <property type="term" value="C:cytosol"/>
    <property type="evidence" value="ECO:0007669"/>
    <property type="project" value="TreeGrafter"/>
</dbReference>
<dbReference type="GO" id="GO:0052906">
    <property type="term" value="F:tRNA (guanine(37)-N1)-methyltransferase activity"/>
    <property type="evidence" value="ECO:0007669"/>
    <property type="project" value="UniProtKB-UniRule"/>
</dbReference>
<dbReference type="GO" id="GO:0002939">
    <property type="term" value="P:tRNA N1-guanine methylation"/>
    <property type="evidence" value="ECO:0007669"/>
    <property type="project" value="TreeGrafter"/>
</dbReference>
<dbReference type="CDD" id="cd18080">
    <property type="entry name" value="TrmD-like"/>
    <property type="match status" value="1"/>
</dbReference>
<dbReference type="Gene3D" id="3.40.1280.10">
    <property type="match status" value="1"/>
</dbReference>
<dbReference type="Gene3D" id="1.10.1270.20">
    <property type="entry name" value="tRNA(m1g37)methyltransferase, domain 2"/>
    <property type="match status" value="1"/>
</dbReference>
<dbReference type="HAMAP" id="MF_00605">
    <property type="entry name" value="TrmD"/>
    <property type="match status" value="1"/>
</dbReference>
<dbReference type="InterPro" id="IPR029028">
    <property type="entry name" value="Alpha/beta_knot_MTases"/>
</dbReference>
<dbReference type="InterPro" id="IPR023148">
    <property type="entry name" value="tRNA_m1G_MeTrfase_C_sf"/>
</dbReference>
<dbReference type="InterPro" id="IPR002649">
    <property type="entry name" value="tRNA_m1G_MeTrfase_TrmD"/>
</dbReference>
<dbReference type="InterPro" id="IPR029026">
    <property type="entry name" value="tRNA_m1G_MTases_N"/>
</dbReference>
<dbReference type="InterPro" id="IPR016009">
    <property type="entry name" value="tRNA_MeTrfase_TRMD/TRM10"/>
</dbReference>
<dbReference type="NCBIfam" id="NF000648">
    <property type="entry name" value="PRK00026.1"/>
    <property type="match status" value="1"/>
</dbReference>
<dbReference type="NCBIfam" id="TIGR00088">
    <property type="entry name" value="trmD"/>
    <property type="match status" value="1"/>
</dbReference>
<dbReference type="PANTHER" id="PTHR46417">
    <property type="entry name" value="TRNA (GUANINE-N(1)-)-METHYLTRANSFERASE"/>
    <property type="match status" value="1"/>
</dbReference>
<dbReference type="PANTHER" id="PTHR46417:SF1">
    <property type="entry name" value="TRNA (GUANINE-N(1)-)-METHYLTRANSFERASE"/>
    <property type="match status" value="1"/>
</dbReference>
<dbReference type="Pfam" id="PF01746">
    <property type="entry name" value="tRNA_m1G_MT"/>
    <property type="match status" value="1"/>
</dbReference>
<dbReference type="PIRSF" id="PIRSF000386">
    <property type="entry name" value="tRNA_mtase"/>
    <property type="match status" value="1"/>
</dbReference>
<dbReference type="SUPFAM" id="SSF75217">
    <property type="entry name" value="alpha/beta knot"/>
    <property type="match status" value="1"/>
</dbReference>
<gene>
    <name type="primary">trmD</name>
    <name type="ordered locus">RP111</name>
</gene>
<protein>
    <recommendedName>
        <fullName>tRNA (guanine-N(1)-)-methyltransferase</fullName>
        <ecNumber>2.1.1.228</ecNumber>
    </recommendedName>
    <alternativeName>
        <fullName>M1G-methyltransferase</fullName>
    </alternativeName>
    <alternativeName>
        <fullName>tRNA [GM37] methyltransferase</fullName>
    </alternativeName>
</protein>
<name>TRMD_RICPR</name>
<feature type="chain" id="PRO_0000060445" description="tRNA (guanine-N(1)-)-methyltransferase">
    <location>
        <begin position="1"/>
        <end position="234"/>
    </location>
</feature>
<feature type="binding site" evidence="1">
    <location>
        <position position="115"/>
    </location>
    <ligand>
        <name>S-adenosyl-L-methionine</name>
        <dbReference type="ChEBI" id="CHEBI:59789"/>
    </ligand>
</feature>
<feature type="binding site" evidence="1">
    <location>
        <begin position="135"/>
        <end position="140"/>
    </location>
    <ligand>
        <name>S-adenosyl-L-methionine</name>
        <dbReference type="ChEBI" id="CHEBI:59789"/>
    </ligand>
</feature>
<comment type="function">
    <text evidence="1">Specifically methylates guanosine-37 in various tRNAs.</text>
</comment>
<comment type="catalytic activity">
    <reaction>
        <text>guanosine(37) in tRNA + S-adenosyl-L-methionine = N(1)-methylguanosine(37) in tRNA + S-adenosyl-L-homocysteine + H(+)</text>
        <dbReference type="Rhea" id="RHEA:36899"/>
        <dbReference type="Rhea" id="RHEA-COMP:10145"/>
        <dbReference type="Rhea" id="RHEA-COMP:10147"/>
        <dbReference type="ChEBI" id="CHEBI:15378"/>
        <dbReference type="ChEBI" id="CHEBI:57856"/>
        <dbReference type="ChEBI" id="CHEBI:59789"/>
        <dbReference type="ChEBI" id="CHEBI:73542"/>
        <dbReference type="ChEBI" id="CHEBI:74269"/>
        <dbReference type="EC" id="2.1.1.228"/>
    </reaction>
</comment>
<comment type="subunit">
    <text evidence="1">Homodimer.</text>
</comment>
<comment type="subcellular location">
    <subcellularLocation>
        <location evidence="2">Cytoplasm</location>
    </subcellularLocation>
</comment>
<comment type="similarity">
    <text evidence="2">Belongs to the RNA methyltransferase TrmD family.</text>
</comment>
<sequence length="234" mass="26338">MSILHVTILTVFPEMFPGTLGYSLAGQALHNNIWSYNIINIRDFGLTKHKNVDDKAYGGGDGLIMRPDVLGNAIENALSLNHNAKIYYPSPRGCVFTQSFAKEMLKNKNLIFLCGRYEGIDERVIAEYNVTEVSVGDYILSGGEIPTLTILDCLIRLLPGVLINQNTLSSESFEKDGEFQGGLECDLYTRPKIWRGRAVPSILLSGNHRLINNWRKEQSHMITKLRRPELLKDL</sequence>